<name>Y1947_ARCFU</name>
<feature type="signal peptide" evidence="1">
    <location>
        <begin position="1"/>
        <end position="20"/>
    </location>
</feature>
<feature type="chain" id="PRO_0000013675" description="Uncharacterized protein AF_1947">
    <location>
        <begin position="21"/>
        <end position="212"/>
    </location>
</feature>
<proteinExistence type="inferred from homology"/>
<gene>
    <name type="ordered locus">AF_1947</name>
</gene>
<evidence type="ECO:0000255" key="1"/>
<dbReference type="EMBL" id="AE000782">
    <property type="protein sequence ID" value="AAB89312.1"/>
    <property type="molecule type" value="Genomic_DNA"/>
</dbReference>
<dbReference type="PIR" id="B69493">
    <property type="entry name" value="B69493"/>
</dbReference>
<dbReference type="RefSeq" id="WP_010879439.1">
    <property type="nucleotide sequence ID" value="NC_000917.1"/>
</dbReference>
<dbReference type="STRING" id="224325.AF_1947"/>
<dbReference type="PaxDb" id="224325-AF_1947"/>
<dbReference type="EnsemblBacteria" id="AAB89312">
    <property type="protein sequence ID" value="AAB89312"/>
    <property type="gene ID" value="AF_1947"/>
</dbReference>
<dbReference type="KEGG" id="afu:AF_1947"/>
<dbReference type="eggNOG" id="arCOG12676">
    <property type="taxonomic scope" value="Archaea"/>
</dbReference>
<dbReference type="HOGENOM" id="CLU_1297435_0_0_2"/>
<dbReference type="OrthoDB" id="383769at2157"/>
<dbReference type="Proteomes" id="UP000002199">
    <property type="component" value="Chromosome"/>
</dbReference>
<dbReference type="InterPro" id="IPR005590">
    <property type="entry name" value="DUF333"/>
</dbReference>
<dbReference type="Pfam" id="PF03891">
    <property type="entry name" value="DUF333"/>
    <property type="match status" value="1"/>
</dbReference>
<accession>O28332</accession>
<reference key="1">
    <citation type="journal article" date="1997" name="Nature">
        <title>The complete genome sequence of the hyperthermophilic, sulphate-reducing archaeon Archaeoglobus fulgidus.</title>
        <authorList>
            <person name="Klenk H.-P."/>
            <person name="Clayton R.A."/>
            <person name="Tomb J.-F."/>
            <person name="White O."/>
            <person name="Nelson K.E."/>
            <person name="Ketchum K.A."/>
            <person name="Dodson R.J."/>
            <person name="Gwinn M.L."/>
            <person name="Hickey E.K."/>
            <person name="Peterson J.D."/>
            <person name="Richardson D.L."/>
            <person name="Kerlavage A.R."/>
            <person name="Graham D.E."/>
            <person name="Kyrpides N.C."/>
            <person name="Fleischmann R.D."/>
            <person name="Quackenbush J."/>
            <person name="Lee N.H."/>
            <person name="Sutton G.G."/>
            <person name="Gill S.R."/>
            <person name="Kirkness E.F."/>
            <person name="Dougherty B.A."/>
            <person name="McKenney K."/>
            <person name="Adams M.D."/>
            <person name="Loftus B.J."/>
            <person name="Peterson S.N."/>
            <person name="Reich C.I."/>
            <person name="McNeil L.K."/>
            <person name="Badger J.H."/>
            <person name="Glodek A."/>
            <person name="Zhou L."/>
            <person name="Overbeek R."/>
            <person name="Gocayne J.D."/>
            <person name="Weidman J.F."/>
            <person name="McDonald L.A."/>
            <person name="Utterback T.R."/>
            <person name="Cotton M.D."/>
            <person name="Spriggs T."/>
            <person name="Artiach P."/>
            <person name="Kaine B.P."/>
            <person name="Sykes S.M."/>
            <person name="Sadow P.W."/>
            <person name="D'Andrea K.P."/>
            <person name="Bowman C."/>
            <person name="Fujii C."/>
            <person name="Garland S.A."/>
            <person name="Mason T.M."/>
            <person name="Olsen G.J."/>
            <person name="Fraser C.M."/>
            <person name="Smith H.O."/>
            <person name="Woese C.R."/>
            <person name="Venter J.C."/>
        </authorList>
    </citation>
    <scope>NUCLEOTIDE SEQUENCE [LARGE SCALE GENOMIC DNA]</scope>
    <source>
        <strain>ATCC 49558 / DSM 4304 / JCM 9628 / NBRC 100126 / VC-16</strain>
    </source>
</reference>
<sequence>MRRVLLCFLTLILLLPAASALRNPSAVYCEAMGYNYVIFSSPYGDVGKCVLPNGEAVNAWDFYRGVVALEYSYCAKQGYEAKHVEREDCKSCLVCVLPDGREVEVAELMGLSFEETTCGDGVCGIPENYSSCPQDCSSGEEDGYCDAVKDGICDPDCTKGEDADCAENLEGGATTVTATTITPSEVKRTPGFEALEVLAALALVLAVSRRRI</sequence>
<organism>
    <name type="scientific">Archaeoglobus fulgidus (strain ATCC 49558 / DSM 4304 / JCM 9628 / NBRC 100126 / VC-16)</name>
    <dbReference type="NCBI Taxonomy" id="224325"/>
    <lineage>
        <taxon>Archaea</taxon>
        <taxon>Methanobacteriati</taxon>
        <taxon>Methanobacteriota</taxon>
        <taxon>Archaeoglobi</taxon>
        <taxon>Archaeoglobales</taxon>
        <taxon>Archaeoglobaceae</taxon>
        <taxon>Archaeoglobus</taxon>
    </lineage>
</organism>
<keyword id="KW-1185">Reference proteome</keyword>
<keyword id="KW-0732">Signal</keyword>
<protein>
    <recommendedName>
        <fullName>Uncharacterized protein AF_1947</fullName>
    </recommendedName>
</protein>